<name>MEP2_TRIRU</name>
<feature type="signal peptide" evidence="2">
    <location>
        <begin position="1"/>
        <end position="19"/>
    </location>
</feature>
<feature type="propeptide" id="PRO_0000380844" evidence="1">
    <location>
        <begin position="20"/>
        <end position="244"/>
    </location>
</feature>
<feature type="chain" id="PRO_0000380845" description="Extracellular metalloproteinase 2">
    <location>
        <begin position="245"/>
        <end position="632"/>
    </location>
</feature>
<feature type="active site" evidence="3">
    <location>
        <position position="430"/>
    </location>
</feature>
<feature type="binding site" evidence="3">
    <location>
        <position position="429"/>
    </location>
    <ligand>
        <name>Zn(2+)</name>
        <dbReference type="ChEBI" id="CHEBI:29105"/>
        <note>catalytic</note>
    </ligand>
</feature>
<feature type="binding site" evidence="3">
    <location>
        <position position="433"/>
    </location>
    <ligand>
        <name>Zn(2+)</name>
        <dbReference type="ChEBI" id="CHEBI:29105"/>
        <note>catalytic</note>
    </ligand>
</feature>
<feature type="glycosylation site" description="N-linked (GlcNAc...) asparagine" evidence="2">
    <location>
        <position position="270"/>
    </location>
</feature>
<accession>Q8NIE3</accession>
<keyword id="KW-0325">Glycoprotein</keyword>
<keyword id="KW-0378">Hydrolase</keyword>
<keyword id="KW-0479">Metal-binding</keyword>
<keyword id="KW-0482">Metalloprotease</keyword>
<keyword id="KW-0645">Protease</keyword>
<keyword id="KW-0964">Secreted</keyword>
<keyword id="KW-0732">Signal</keyword>
<keyword id="KW-0843">Virulence</keyword>
<keyword id="KW-0862">Zinc</keyword>
<keyword id="KW-0865">Zymogen</keyword>
<evidence type="ECO:0000250" key="1"/>
<evidence type="ECO:0000255" key="2"/>
<evidence type="ECO:0000255" key="3">
    <source>
        <dbReference type="PROSITE-ProRule" id="PRU10095"/>
    </source>
</evidence>
<evidence type="ECO:0000305" key="4"/>
<protein>
    <recommendedName>
        <fullName>Extracellular metalloproteinase 2</fullName>
        <ecNumber>3.4.24.-</ecNumber>
    </recommendedName>
    <alternativeName>
        <fullName>Fungalysin MEP2</fullName>
    </alternativeName>
</protein>
<comment type="function">
    <text evidence="1">Secreted metalloproteinase probably acting as a virulence factor.</text>
</comment>
<comment type="cofactor">
    <cofactor evidence="1">
        <name>Zn(2+)</name>
        <dbReference type="ChEBI" id="CHEBI:29105"/>
    </cofactor>
    <text evidence="1">Binds 1 zinc ion per subunit.</text>
</comment>
<comment type="subcellular location">
    <subcellularLocation>
        <location evidence="1">Secreted</location>
    </subcellularLocation>
</comment>
<comment type="induction">
    <text>Expression is strongly increased during growth on protein-rich medium containing keratin.</text>
</comment>
<comment type="similarity">
    <text evidence="4">Belongs to the peptidase M36 family.</text>
</comment>
<reference key="1">
    <citation type="journal article" date="2002" name="Int. J. Med. Microbiol.">
        <title>Secreted proteases from pathogenic fungi.</title>
        <authorList>
            <person name="Monod M."/>
            <person name="Capoccia S."/>
            <person name="Lechenne B."/>
            <person name="Zaugg C."/>
            <person name="Holdom M."/>
            <person name="Jousson O."/>
        </authorList>
    </citation>
    <scope>NUCLEOTIDE SEQUENCE [GENOMIC DNA / MRNA]</scope>
</reference>
<reference key="2">
    <citation type="journal article" date="2004" name="Microbiology">
        <title>Multiplication of an ancestral gene encoding secreted fungalysin preceded species differentiation in the dermatophytes Trichophyton and Microsporum.</title>
        <authorList>
            <person name="Jousson O."/>
            <person name="Lechenne B."/>
            <person name="Bontems O."/>
            <person name="Capoccia S."/>
            <person name="Mignon B."/>
            <person name="Barblan J."/>
            <person name="Quadroni M."/>
            <person name="Monod M."/>
        </authorList>
    </citation>
    <scope>NUCLEOTIDE SEQUENCE [GENOMIC DNA]</scope>
    <scope>IDENTIFICATION BY MASS SPECTROMETRY</scope>
    <scope>SUBCELLULAR LOCATION</scope>
</reference>
<sequence>MHGLLLAGLAAALPLGVAGLPARQQSGLSPRGVDINPYRFASMAKYSEHKSTSQMVHSFSYSKDDDYVATATKLVKSTFPNMTFRTVKDHYIGTNGIGHVHFKQTAHGIDIDNADFNVNIGRDGKVFTFGNSFYEGEMPKTNPLTKRDFSDPVKALQGAIKTLKLPVKPQSAKAMPMKEAETFKFEGTSGALSDPMAKLVYIQKDGKLHLTWRVETDVGDNWLLSYVDSKETETVHNVVDYVASADYKVFAWGLNDPTEGQPTMIKDPWNTTGTGSPFTWHGDGQMDYTVTRGNNIAAQDNPSGGEQWENNYRPDSPELSFVYEYSEQMEPDQYKDFAITQLFYTTNTYHDVLYALGFTEEAGNFQMNNNGKGGEGNDFAICNAQDGSGTNNANFATPPDGQNGRMRMYTWTTAQPSRDGDLEAGIVIHEYTHGLSNRLCGGPANSNCLNELEAGGMGEGWGDFYATAIRLKQGDTHDTDYTMGEWAANMKGGIREYPYSTNMQTNPYTYADVQGMDEVHGIGTVWATILYEVLWNLIDEHGMSKNIMPKFVNGAPSDGRNLAMKLVLDGMTLMPCNPNFMQARDAIIDADQALTNGQNKCALMKAFSKRGLGANYKHGKNRVNNFDMPADC</sequence>
<organism>
    <name type="scientific">Trichophyton rubrum</name>
    <name type="common">Athlete's foot fungus</name>
    <name type="synonym">Epidermophyton rubrum</name>
    <dbReference type="NCBI Taxonomy" id="5551"/>
    <lineage>
        <taxon>Eukaryota</taxon>
        <taxon>Fungi</taxon>
        <taxon>Dikarya</taxon>
        <taxon>Ascomycota</taxon>
        <taxon>Pezizomycotina</taxon>
        <taxon>Eurotiomycetes</taxon>
        <taxon>Eurotiomycetidae</taxon>
        <taxon>Onygenales</taxon>
        <taxon>Arthrodermataceae</taxon>
        <taxon>Trichophyton</taxon>
    </lineage>
</organism>
<dbReference type="EC" id="3.4.24.-"/>
<dbReference type="EMBL" id="AF407188">
    <property type="protein sequence ID" value="AAN03639.1"/>
    <property type="molecule type" value="mRNA"/>
</dbReference>
<dbReference type="EMBL" id="AF407187">
    <property type="protein sequence ID" value="AAN03638.1"/>
    <property type="molecule type" value="Genomic_DNA"/>
</dbReference>
<dbReference type="SMR" id="Q8NIE3"/>
<dbReference type="MEROPS" id="M36.001"/>
<dbReference type="GlyCosmos" id="Q8NIE3">
    <property type="glycosylation" value="1 site, No reported glycans"/>
</dbReference>
<dbReference type="VEuPathDB" id="FungiDB:TERG_04809"/>
<dbReference type="OMA" id="NDFAICN"/>
<dbReference type="GO" id="GO:0005576">
    <property type="term" value="C:extracellular region"/>
    <property type="evidence" value="ECO:0007669"/>
    <property type="project" value="UniProtKB-SubCell"/>
</dbReference>
<dbReference type="GO" id="GO:0004222">
    <property type="term" value="F:metalloendopeptidase activity"/>
    <property type="evidence" value="ECO:0007669"/>
    <property type="project" value="InterPro"/>
</dbReference>
<dbReference type="GO" id="GO:0008270">
    <property type="term" value="F:zinc ion binding"/>
    <property type="evidence" value="ECO:0007669"/>
    <property type="project" value="InterPro"/>
</dbReference>
<dbReference type="GO" id="GO:0006508">
    <property type="term" value="P:proteolysis"/>
    <property type="evidence" value="ECO:0007669"/>
    <property type="project" value="UniProtKB-KW"/>
</dbReference>
<dbReference type="CDD" id="cd09596">
    <property type="entry name" value="M36"/>
    <property type="match status" value="1"/>
</dbReference>
<dbReference type="Gene3D" id="3.10.170.10">
    <property type="match status" value="1"/>
</dbReference>
<dbReference type="Gene3D" id="1.10.390.10">
    <property type="entry name" value="Neutral Protease Domain 2"/>
    <property type="match status" value="1"/>
</dbReference>
<dbReference type="InterPro" id="IPR011096">
    <property type="entry name" value="FTP_domain"/>
</dbReference>
<dbReference type="InterPro" id="IPR050371">
    <property type="entry name" value="Fungal_virulence_M36"/>
</dbReference>
<dbReference type="InterPro" id="IPR001842">
    <property type="entry name" value="Peptidase_M36"/>
</dbReference>
<dbReference type="InterPro" id="IPR027268">
    <property type="entry name" value="Peptidase_M4/M1_CTD_sf"/>
</dbReference>
<dbReference type="PANTHER" id="PTHR33478">
    <property type="entry name" value="EXTRACELLULAR METALLOPROTEINASE MEP"/>
    <property type="match status" value="1"/>
</dbReference>
<dbReference type="PANTHER" id="PTHR33478:SF1">
    <property type="entry name" value="EXTRACELLULAR METALLOPROTEINASE MEP"/>
    <property type="match status" value="1"/>
</dbReference>
<dbReference type="Pfam" id="PF07504">
    <property type="entry name" value="FTP"/>
    <property type="match status" value="1"/>
</dbReference>
<dbReference type="Pfam" id="PF02128">
    <property type="entry name" value="Peptidase_M36"/>
    <property type="match status" value="1"/>
</dbReference>
<dbReference type="PRINTS" id="PR00999">
    <property type="entry name" value="FUNGALYSIN"/>
</dbReference>
<dbReference type="SUPFAM" id="SSF55486">
    <property type="entry name" value="Metalloproteases ('zincins'), catalytic domain"/>
    <property type="match status" value="1"/>
</dbReference>
<dbReference type="PROSITE" id="PS00142">
    <property type="entry name" value="ZINC_PROTEASE"/>
    <property type="match status" value="1"/>
</dbReference>
<proteinExistence type="evidence at protein level"/>
<gene>
    <name type="primary">MEP2</name>
</gene>